<proteinExistence type="inferred from homology"/>
<gene>
    <name evidence="1" type="primary">fabA</name>
    <name type="ordered locus">SG1026</name>
</gene>
<reference key="1">
    <citation type="journal article" date="2006" name="Genome Res.">
        <title>Massive genome erosion and functional adaptations provide insights into the symbiotic lifestyle of Sodalis glossinidius in the tsetse host.</title>
        <authorList>
            <person name="Toh H."/>
            <person name="Weiss B.L."/>
            <person name="Perkin S.A.H."/>
            <person name="Yamashita A."/>
            <person name="Oshima K."/>
            <person name="Hattori M."/>
            <person name="Aksoy S."/>
        </authorList>
    </citation>
    <scope>NUCLEOTIDE SEQUENCE [LARGE SCALE GENOMIC DNA]</scope>
    <source>
        <strain>morsitans</strain>
    </source>
</reference>
<evidence type="ECO:0000255" key="1">
    <source>
        <dbReference type="HAMAP-Rule" id="MF_00405"/>
    </source>
</evidence>
<sequence length="172" mass="19019">MVDKRESYTKEDLLASSRGELFGKEGPQLPAPNMLMMDRVVKMTDDGGNYNKGFVEAELDIHPDMWFFGCHFIGDPVMPGCLGLDAMWQLVGFYLGWLGGKGKGRALGVGEVKFTGQILPSAKKVTYRIHFRRVINRKLVMGMADGEVLCDGTVIYTASDLKVGLFKDTAAF</sequence>
<protein>
    <recommendedName>
        <fullName evidence="1">3-hydroxydecanoyl-[acyl-carrier-protein] dehydratase</fullName>
        <ecNumber evidence="1">4.2.1.59</ecNumber>
    </recommendedName>
    <alternativeName>
        <fullName evidence="1">3-hydroxyacyl-[acyl-carrier-protein] dehydratase FabA</fullName>
    </alternativeName>
    <alternativeName>
        <fullName evidence="1">Beta-hydroxydecanoyl thioester dehydrase</fullName>
    </alternativeName>
    <alternativeName>
        <fullName evidence="1">Trans-2-decenoyl-[acyl-carrier-protein] isomerase</fullName>
        <ecNumber evidence="1">5.3.3.14</ecNumber>
    </alternativeName>
</protein>
<accession>Q2NU74</accession>
<feature type="chain" id="PRO_0000267757" description="3-hydroxydecanoyl-[acyl-carrier-protein] dehydratase">
    <location>
        <begin position="1"/>
        <end position="172"/>
    </location>
</feature>
<feature type="active site" evidence="1">
    <location>
        <position position="71"/>
    </location>
</feature>
<keyword id="KW-0963">Cytoplasm</keyword>
<keyword id="KW-0275">Fatty acid biosynthesis</keyword>
<keyword id="KW-0276">Fatty acid metabolism</keyword>
<keyword id="KW-0413">Isomerase</keyword>
<keyword id="KW-0444">Lipid biosynthesis</keyword>
<keyword id="KW-0443">Lipid metabolism</keyword>
<keyword id="KW-0456">Lyase</keyword>
<name>FABA_SODGM</name>
<comment type="function">
    <text evidence="1">Necessary for the introduction of cis unsaturation into fatty acids. Catalyzes the dehydration of (3R)-3-hydroxydecanoyl-ACP to E-(2)-decenoyl-ACP and then its isomerization to Z-(3)-decenoyl-ACP. Can catalyze the dehydratase reaction for beta-hydroxyacyl-ACPs with saturated chain lengths up to 16:0, being most active on intermediate chain length.</text>
</comment>
<comment type="catalytic activity">
    <reaction evidence="1">
        <text>a (3R)-hydroxyacyl-[ACP] = a (2E)-enoyl-[ACP] + H2O</text>
        <dbReference type="Rhea" id="RHEA:13097"/>
        <dbReference type="Rhea" id="RHEA-COMP:9925"/>
        <dbReference type="Rhea" id="RHEA-COMP:9945"/>
        <dbReference type="ChEBI" id="CHEBI:15377"/>
        <dbReference type="ChEBI" id="CHEBI:78784"/>
        <dbReference type="ChEBI" id="CHEBI:78827"/>
        <dbReference type="EC" id="4.2.1.59"/>
    </reaction>
</comment>
<comment type="catalytic activity">
    <reaction evidence="1">
        <text>(3R)-hydroxydecanoyl-[ACP] = (2E)-decenoyl-[ACP] + H2O</text>
        <dbReference type="Rhea" id="RHEA:41860"/>
        <dbReference type="Rhea" id="RHEA-COMP:9638"/>
        <dbReference type="Rhea" id="RHEA-COMP:9639"/>
        <dbReference type="ChEBI" id="CHEBI:15377"/>
        <dbReference type="ChEBI" id="CHEBI:78466"/>
        <dbReference type="ChEBI" id="CHEBI:78467"/>
    </reaction>
</comment>
<comment type="catalytic activity">
    <reaction evidence="1">
        <text>(2E)-decenoyl-[ACP] = (3Z)-decenoyl-[ACP]</text>
        <dbReference type="Rhea" id="RHEA:23568"/>
        <dbReference type="Rhea" id="RHEA-COMP:9639"/>
        <dbReference type="Rhea" id="RHEA-COMP:9927"/>
        <dbReference type="ChEBI" id="CHEBI:78467"/>
        <dbReference type="ChEBI" id="CHEBI:78798"/>
        <dbReference type="EC" id="5.3.3.14"/>
    </reaction>
</comment>
<comment type="pathway">
    <text evidence="1">Lipid metabolism; fatty acid biosynthesis.</text>
</comment>
<comment type="subunit">
    <text evidence="1">Homodimer.</text>
</comment>
<comment type="subcellular location">
    <subcellularLocation>
        <location evidence="1">Cytoplasm</location>
    </subcellularLocation>
</comment>
<comment type="similarity">
    <text evidence="1">Belongs to the thioester dehydratase family. FabA subfamily.</text>
</comment>
<dbReference type="EC" id="4.2.1.59" evidence="1"/>
<dbReference type="EC" id="5.3.3.14" evidence="1"/>
<dbReference type="EMBL" id="AP008232">
    <property type="protein sequence ID" value="BAE74301.1"/>
    <property type="molecule type" value="Genomic_DNA"/>
</dbReference>
<dbReference type="RefSeq" id="WP_011410886.1">
    <property type="nucleotide sequence ID" value="NC_007712.1"/>
</dbReference>
<dbReference type="SMR" id="Q2NU74"/>
<dbReference type="STRING" id="343509.SG1026"/>
<dbReference type="KEGG" id="sgl:SG1026"/>
<dbReference type="eggNOG" id="COG0764">
    <property type="taxonomic scope" value="Bacteria"/>
</dbReference>
<dbReference type="HOGENOM" id="CLU_097925_0_0_6"/>
<dbReference type="OrthoDB" id="9786735at2"/>
<dbReference type="UniPathway" id="UPA00094"/>
<dbReference type="Proteomes" id="UP000001932">
    <property type="component" value="Chromosome"/>
</dbReference>
<dbReference type="GO" id="GO:0005737">
    <property type="term" value="C:cytoplasm"/>
    <property type="evidence" value="ECO:0007669"/>
    <property type="project" value="UniProtKB-SubCell"/>
</dbReference>
<dbReference type="GO" id="GO:0019171">
    <property type="term" value="F:(3R)-hydroxyacyl-[acyl-carrier-protein] dehydratase activity"/>
    <property type="evidence" value="ECO:0007669"/>
    <property type="project" value="UniProtKB-UniRule"/>
</dbReference>
<dbReference type="GO" id="GO:0034017">
    <property type="term" value="F:trans-2-decenoyl-acyl-carrier-protein isomerase activity"/>
    <property type="evidence" value="ECO:0007669"/>
    <property type="project" value="UniProtKB-UniRule"/>
</dbReference>
<dbReference type="GO" id="GO:0006636">
    <property type="term" value="P:unsaturated fatty acid biosynthetic process"/>
    <property type="evidence" value="ECO:0007669"/>
    <property type="project" value="UniProtKB-UniRule"/>
</dbReference>
<dbReference type="CDD" id="cd01287">
    <property type="entry name" value="FabA"/>
    <property type="match status" value="1"/>
</dbReference>
<dbReference type="FunFam" id="3.10.129.10:FF:000003">
    <property type="entry name" value="3-hydroxydecanoyl-[acyl-carrier-protein] dehydratase"/>
    <property type="match status" value="1"/>
</dbReference>
<dbReference type="Gene3D" id="3.10.129.10">
    <property type="entry name" value="Hotdog Thioesterase"/>
    <property type="match status" value="1"/>
</dbReference>
<dbReference type="HAMAP" id="MF_00405">
    <property type="entry name" value="FabA"/>
    <property type="match status" value="1"/>
</dbReference>
<dbReference type="InterPro" id="IPR010083">
    <property type="entry name" value="FabA"/>
</dbReference>
<dbReference type="InterPro" id="IPR013114">
    <property type="entry name" value="FabA_FabZ"/>
</dbReference>
<dbReference type="InterPro" id="IPR029069">
    <property type="entry name" value="HotDog_dom_sf"/>
</dbReference>
<dbReference type="NCBIfam" id="TIGR01749">
    <property type="entry name" value="fabA"/>
    <property type="match status" value="1"/>
</dbReference>
<dbReference type="NCBIfam" id="NF003509">
    <property type="entry name" value="PRK05174.1"/>
    <property type="match status" value="1"/>
</dbReference>
<dbReference type="PANTHER" id="PTHR30272">
    <property type="entry name" value="3-HYDROXYACYL-[ACYL-CARRIER-PROTEIN] DEHYDRATASE"/>
    <property type="match status" value="1"/>
</dbReference>
<dbReference type="PANTHER" id="PTHR30272:SF8">
    <property type="entry name" value="3-HYDROXYDECANOYL-[ACYL-CARRIER-PROTEIN] DEHYDRATASE"/>
    <property type="match status" value="1"/>
</dbReference>
<dbReference type="Pfam" id="PF07977">
    <property type="entry name" value="FabA"/>
    <property type="match status" value="1"/>
</dbReference>
<dbReference type="SUPFAM" id="SSF54637">
    <property type="entry name" value="Thioesterase/thiol ester dehydrase-isomerase"/>
    <property type="match status" value="1"/>
</dbReference>
<organism>
    <name type="scientific">Sodalis glossinidius (strain morsitans)</name>
    <dbReference type="NCBI Taxonomy" id="343509"/>
    <lineage>
        <taxon>Bacteria</taxon>
        <taxon>Pseudomonadati</taxon>
        <taxon>Pseudomonadota</taxon>
        <taxon>Gammaproteobacteria</taxon>
        <taxon>Enterobacterales</taxon>
        <taxon>Bruguierivoracaceae</taxon>
        <taxon>Sodalis</taxon>
    </lineage>
</organism>